<feature type="chain" id="PRO_0000328067" description="Eukaryotic translation initiation factor 2 subunit 1">
    <location>
        <begin position="1"/>
        <end position="341"/>
    </location>
</feature>
<feature type="domain" description="S1 motif" evidence="4">
    <location>
        <begin position="18"/>
        <end position="89"/>
    </location>
</feature>
<feature type="region of interest" description="Disordered" evidence="5">
    <location>
        <begin position="301"/>
        <end position="341"/>
    </location>
</feature>
<feature type="compositionally biased region" description="Acidic residues" evidence="5">
    <location>
        <begin position="303"/>
        <end position="330"/>
    </location>
</feature>
<feature type="compositionally biased region" description="Basic and acidic residues" evidence="5">
    <location>
        <begin position="331"/>
        <end position="341"/>
    </location>
</feature>
<dbReference type="EMBL" id="AAFI02000007">
    <property type="protein sequence ID" value="EAL71510.1"/>
    <property type="molecule type" value="Genomic_DNA"/>
</dbReference>
<dbReference type="RefSeq" id="XP_645435.1">
    <property type="nucleotide sequence ID" value="XM_640343.1"/>
</dbReference>
<dbReference type="SMR" id="Q869N9"/>
<dbReference type="FunCoup" id="Q869N9">
    <property type="interactions" value="1046"/>
</dbReference>
<dbReference type="STRING" id="44689.Q869N9"/>
<dbReference type="PaxDb" id="44689-DDB0229412"/>
<dbReference type="EnsemblProtists" id="EAL71510">
    <property type="protein sequence ID" value="EAL71510"/>
    <property type="gene ID" value="DDB_G0271862"/>
</dbReference>
<dbReference type="GeneID" id="8618175"/>
<dbReference type="KEGG" id="ddi:DDB_G0271862"/>
<dbReference type="dictyBase" id="DDB_G0271862">
    <property type="gene designation" value="eif2s1"/>
</dbReference>
<dbReference type="VEuPathDB" id="AmoebaDB:DDB_G0271862"/>
<dbReference type="eggNOG" id="KOG2916">
    <property type="taxonomic scope" value="Eukaryota"/>
</dbReference>
<dbReference type="HOGENOM" id="CLU_033458_0_1_1"/>
<dbReference type="InParanoid" id="Q869N9"/>
<dbReference type="OMA" id="DVNEHQR"/>
<dbReference type="PhylomeDB" id="Q869N9"/>
<dbReference type="Reactome" id="R-DDI-156827">
    <property type="pathway name" value="L13a-mediated translational silencing of Ceruloplasmin expression"/>
</dbReference>
<dbReference type="Reactome" id="R-DDI-382556">
    <property type="pathway name" value="ABC-family proteins mediated transport"/>
</dbReference>
<dbReference type="Reactome" id="R-DDI-72695">
    <property type="pathway name" value="Formation of the ternary complex, and subsequently, the 43S complex"/>
</dbReference>
<dbReference type="Reactome" id="R-DDI-72702">
    <property type="pathway name" value="Ribosomal scanning and start codon recognition"/>
</dbReference>
<dbReference type="Reactome" id="R-DDI-72731">
    <property type="pathway name" value="Recycling of eIF2:GDP"/>
</dbReference>
<dbReference type="Reactome" id="R-DDI-9840373">
    <property type="pathway name" value="Cellular response to mitochondrial stress"/>
</dbReference>
<dbReference type="PRO" id="PR:Q869N9"/>
<dbReference type="Proteomes" id="UP000002195">
    <property type="component" value="Chromosome 2"/>
</dbReference>
<dbReference type="GO" id="GO:0005829">
    <property type="term" value="C:cytosol"/>
    <property type="evidence" value="ECO:0007669"/>
    <property type="project" value="UniProtKB-SubCell"/>
</dbReference>
<dbReference type="GO" id="GO:0033290">
    <property type="term" value="C:eukaryotic 48S preinitiation complex"/>
    <property type="evidence" value="ECO:0000318"/>
    <property type="project" value="GO_Central"/>
</dbReference>
<dbReference type="GO" id="GO:0005850">
    <property type="term" value="C:eukaryotic translation initiation factor 2 complex"/>
    <property type="evidence" value="ECO:0000250"/>
    <property type="project" value="UniProtKB"/>
</dbReference>
<dbReference type="GO" id="GO:0043022">
    <property type="term" value="F:ribosome binding"/>
    <property type="evidence" value="ECO:0000318"/>
    <property type="project" value="GO_Central"/>
</dbReference>
<dbReference type="GO" id="GO:0003723">
    <property type="term" value="F:RNA binding"/>
    <property type="evidence" value="ECO:0007669"/>
    <property type="project" value="UniProtKB-KW"/>
</dbReference>
<dbReference type="GO" id="GO:0003743">
    <property type="term" value="F:translation initiation factor activity"/>
    <property type="evidence" value="ECO:0000318"/>
    <property type="project" value="GO_Central"/>
</dbReference>
<dbReference type="GO" id="GO:0006417">
    <property type="term" value="P:regulation of translation"/>
    <property type="evidence" value="ECO:0007669"/>
    <property type="project" value="UniProtKB-KW"/>
</dbReference>
<dbReference type="GO" id="GO:0006413">
    <property type="term" value="P:translational initiation"/>
    <property type="evidence" value="ECO:0000318"/>
    <property type="project" value="GO_Central"/>
</dbReference>
<dbReference type="CDD" id="cd04452">
    <property type="entry name" value="S1_IF2_alpha"/>
    <property type="match status" value="1"/>
</dbReference>
<dbReference type="FunFam" id="3.30.70.1130:FF:000001">
    <property type="entry name" value="Eukaryotic translation initiation factor 2 subunit 1"/>
    <property type="match status" value="1"/>
</dbReference>
<dbReference type="FunFam" id="2.40.50.140:FF:000015">
    <property type="entry name" value="Eukaryotic translation initiation factor 2 subunit alpha"/>
    <property type="match status" value="1"/>
</dbReference>
<dbReference type="Gene3D" id="3.30.70.1130">
    <property type="entry name" value="EIF_2_alpha"/>
    <property type="match status" value="1"/>
</dbReference>
<dbReference type="Gene3D" id="2.40.50.140">
    <property type="entry name" value="Nucleic acid-binding proteins"/>
    <property type="match status" value="1"/>
</dbReference>
<dbReference type="Gene3D" id="1.10.150.190">
    <property type="entry name" value="Translation initiation factor 2, subunit 1, domain 2"/>
    <property type="match status" value="1"/>
</dbReference>
<dbReference type="InterPro" id="IPR012340">
    <property type="entry name" value="NA-bd_OB-fold"/>
</dbReference>
<dbReference type="InterPro" id="IPR003029">
    <property type="entry name" value="S1_domain"/>
</dbReference>
<dbReference type="InterPro" id="IPR044126">
    <property type="entry name" value="S1_IF2_alpha"/>
</dbReference>
<dbReference type="InterPro" id="IPR024055">
    <property type="entry name" value="TIF2_asu_C"/>
</dbReference>
<dbReference type="InterPro" id="IPR024054">
    <property type="entry name" value="TIF2_asu_middle_sf"/>
</dbReference>
<dbReference type="InterPro" id="IPR011488">
    <property type="entry name" value="TIF_2_asu"/>
</dbReference>
<dbReference type="PANTHER" id="PTHR10602">
    <property type="entry name" value="EUKARYOTIC TRANSLATION INITIATION FACTOR 2 SUBUNIT 1"/>
    <property type="match status" value="1"/>
</dbReference>
<dbReference type="PANTHER" id="PTHR10602:SF0">
    <property type="entry name" value="EUKARYOTIC TRANSLATION INITIATION FACTOR 2 SUBUNIT 1"/>
    <property type="match status" value="1"/>
</dbReference>
<dbReference type="Pfam" id="PF07541">
    <property type="entry name" value="EIF_2_alpha"/>
    <property type="match status" value="1"/>
</dbReference>
<dbReference type="Pfam" id="PF00575">
    <property type="entry name" value="S1"/>
    <property type="match status" value="1"/>
</dbReference>
<dbReference type="SMART" id="SM00316">
    <property type="entry name" value="S1"/>
    <property type="match status" value="1"/>
</dbReference>
<dbReference type="SUPFAM" id="SSF110993">
    <property type="entry name" value="eIF-2-alpha, C-terminal domain"/>
    <property type="match status" value="1"/>
</dbReference>
<dbReference type="SUPFAM" id="SSF116742">
    <property type="entry name" value="eIF2alpha middle domain-like"/>
    <property type="match status" value="1"/>
</dbReference>
<dbReference type="SUPFAM" id="SSF50249">
    <property type="entry name" value="Nucleic acid-binding proteins"/>
    <property type="match status" value="1"/>
</dbReference>
<dbReference type="PROSITE" id="PS50126">
    <property type="entry name" value="S1"/>
    <property type="match status" value="1"/>
</dbReference>
<proteinExistence type="evidence at protein level"/>
<gene>
    <name type="primary">eif2s1</name>
    <name type="synonym">eif2a</name>
    <name type="ORF">DDB_G0271862</name>
</gene>
<reference key="1">
    <citation type="journal article" date="2002" name="Nature">
        <title>Sequence and analysis of chromosome 2 of Dictyostelium discoideum.</title>
        <authorList>
            <person name="Gloeckner G."/>
            <person name="Eichinger L."/>
            <person name="Szafranski K."/>
            <person name="Pachebat J.A."/>
            <person name="Bankier A.T."/>
            <person name="Dear P.H."/>
            <person name="Lehmann R."/>
            <person name="Baumgart C."/>
            <person name="Parra G."/>
            <person name="Abril J.F."/>
            <person name="Guigo R."/>
            <person name="Kumpf K."/>
            <person name="Tunggal B."/>
            <person name="Cox E.C."/>
            <person name="Quail M.A."/>
            <person name="Platzer M."/>
            <person name="Rosenthal A."/>
            <person name="Noegel A.A."/>
        </authorList>
    </citation>
    <scope>NUCLEOTIDE SEQUENCE [LARGE SCALE GENOMIC DNA]</scope>
    <source>
        <strain>AX4</strain>
    </source>
</reference>
<reference key="2">
    <citation type="journal article" date="2005" name="Nature">
        <title>The genome of the social amoeba Dictyostelium discoideum.</title>
        <authorList>
            <person name="Eichinger L."/>
            <person name="Pachebat J.A."/>
            <person name="Gloeckner G."/>
            <person name="Rajandream M.A."/>
            <person name="Sucgang R."/>
            <person name="Berriman M."/>
            <person name="Song J."/>
            <person name="Olsen R."/>
            <person name="Szafranski K."/>
            <person name="Xu Q."/>
            <person name="Tunggal B."/>
            <person name="Kummerfeld S."/>
            <person name="Madera M."/>
            <person name="Konfortov B.A."/>
            <person name="Rivero F."/>
            <person name="Bankier A.T."/>
            <person name="Lehmann R."/>
            <person name="Hamlin N."/>
            <person name="Davies R."/>
            <person name="Gaudet P."/>
            <person name="Fey P."/>
            <person name="Pilcher K."/>
            <person name="Chen G."/>
            <person name="Saunders D."/>
            <person name="Sodergren E.J."/>
            <person name="Davis P."/>
            <person name="Kerhornou A."/>
            <person name="Nie X."/>
            <person name="Hall N."/>
            <person name="Anjard C."/>
            <person name="Hemphill L."/>
            <person name="Bason N."/>
            <person name="Farbrother P."/>
            <person name="Desany B."/>
            <person name="Just E."/>
            <person name="Morio T."/>
            <person name="Rost R."/>
            <person name="Churcher C.M."/>
            <person name="Cooper J."/>
            <person name="Haydock S."/>
            <person name="van Driessche N."/>
            <person name="Cronin A."/>
            <person name="Goodhead I."/>
            <person name="Muzny D.M."/>
            <person name="Mourier T."/>
            <person name="Pain A."/>
            <person name="Lu M."/>
            <person name="Harper D."/>
            <person name="Lindsay R."/>
            <person name="Hauser H."/>
            <person name="James K.D."/>
            <person name="Quiles M."/>
            <person name="Madan Babu M."/>
            <person name="Saito T."/>
            <person name="Buchrieser C."/>
            <person name="Wardroper A."/>
            <person name="Felder M."/>
            <person name="Thangavelu M."/>
            <person name="Johnson D."/>
            <person name="Knights A."/>
            <person name="Loulseged H."/>
            <person name="Mungall K.L."/>
            <person name="Oliver K."/>
            <person name="Price C."/>
            <person name="Quail M.A."/>
            <person name="Urushihara H."/>
            <person name="Hernandez J."/>
            <person name="Rabbinowitsch E."/>
            <person name="Steffen D."/>
            <person name="Sanders M."/>
            <person name="Ma J."/>
            <person name="Kohara Y."/>
            <person name="Sharp S."/>
            <person name="Simmonds M.N."/>
            <person name="Spiegler S."/>
            <person name="Tivey A."/>
            <person name="Sugano S."/>
            <person name="White B."/>
            <person name="Walker D."/>
            <person name="Woodward J.R."/>
            <person name="Winckler T."/>
            <person name="Tanaka Y."/>
            <person name="Shaulsky G."/>
            <person name="Schleicher M."/>
            <person name="Weinstock G.M."/>
            <person name="Rosenthal A."/>
            <person name="Cox E.C."/>
            <person name="Chisholm R.L."/>
            <person name="Gibbs R.A."/>
            <person name="Loomis W.F."/>
            <person name="Platzer M."/>
            <person name="Kay R.R."/>
            <person name="Williams J.G."/>
            <person name="Dear P.H."/>
            <person name="Noegel A.A."/>
            <person name="Barrell B.G."/>
            <person name="Kuspa A."/>
        </authorList>
    </citation>
    <scope>NUCLEOTIDE SEQUENCE [LARGE SCALE GENOMIC DNA]</scope>
    <source>
        <strain>AX4</strain>
    </source>
</reference>
<reference key="3">
    <citation type="submission" date="2010-01" db="UniProtKB">
        <authorList>
            <person name="Bienvenut W.V."/>
            <person name="Veltman D.M."/>
            <person name="Insall R.H."/>
        </authorList>
    </citation>
    <scope>PROTEIN SEQUENCE OF 173-181 AND 233-240</scope>
    <scope>IDENTIFICATION BY MASS SPECTROMETRY</scope>
</reference>
<accession>Q869N9</accession>
<accession>Q55AH4</accession>
<organism>
    <name type="scientific">Dictyostelium discoideum</name>
    <name type="common">Social amoeba</name>
    <dbReference type="NCBI Taxonomy" id="44689"/>
    <lineage>
        <taxon>Eukaryota</taxon>
        <taxon>Amoebozoa</taxon>
        <taxon>Evosea</taxon>
        <taxon>Eumycetozoa</taxon>
        <taxon>Dictyostelia</taxon>
        <taxon>Dictyosteliales</taxon>
        <taxon>Dictyosteliaceae</taxon>
        <taxon>Dictyostelium</taxon>
    </lineage>
</organism>
<evidence type="ECO:0000250" key="1">
    <source>
        <dbReference type="UniProtKB" id="P05198"/>
    </source>
</evidence>
<evidence type="ECO:0000250" key="2">
    <source>
        <dbReference type="UniProtKB" id="P20459"/>
    </source>
</evidence>
<evidence type="ECO:0000250" key="3">
    <source>
        <dbReference type="UniProtKB" id="P56286"/>
    </source>
</evidence>
<evidence type="ECO:0000255" key="4">
    <source>
        <dbReference type="PROSITE-ProRule" id="PRU00180"/>
    </source>
</evidence>
<evidence type="ECO:0000256" key="5">
    <source>
        <dbReference type="SAM" id="MobiDB-lite"/>
    </source>
</evidence>
<evidence type="ECO:0000305" key="6"/>
<keyword id="KW-0963">Cytoplasm</keyword>
<keyword id="KW-0903">Direct protein sequencing</keyword>
<keyword id="KW-0396">Initiation factor</keyword>
<keyword id="KW-0648">Protein biosynthesis</keyword>
<keyword id="KW-1185">Reference proteome</keyword>
<keyword id="KW-0694">RNA-binding</keyword>
<keyword id="KW-0810">Translation regulation</keyword>
<comment type="function">
    <text evidence="1">eIF-2 functions in the early steps of protein synthesis by forming a ternary complex with GTP and initiator tRNA. This complex binds to a 40S ribosomal subunit, followed by mRNA binding to form a 43S pre-initiation complex. Junction of the 60S ribosomal subunit to form the 80S initiation complex is preceded by hydrolysis of the GTP bound to eIF-2 and release of an eIF-2-GDP binary complex. In order for eIF-2 to recycle and catalyze another round of initiation, the GDP bound to eIF-2 must exchange with GTP by way of a reaction catalyzed by eIF2B.</text>
</comment>
<comment type="subunit">
    <text evidence="2">Eukaryotic translation initiation factor 2 eIF2 is a heterotrimeric complex composed of an alpha, a beta and a gamma subunit.</text>
</comment>
<comment type="subcellular location">
    <subcellularLocation>
        <location evidence="3">Cytoplasm</location>
        <location evidence="3">Cytosol</location>
    </subcellularLocation>
</comment>
<comment type="similarity">
    <text evidence="6">Belongs to the eIF-2-alpha family.</text>
</comment>
<name>IF2A_DICDI</name>
<sequence>MVFENDCRMYEKKYPEENELVMVRIESIGDMGVYVSLLEYNNIEGMILLSEISRRRIRSINKLVRVGKTEAVVVVRVDKDKGYIDLSKRRVTPEEYAQCEERFHKSKAVHGIVRYVATKLSTEDNVVKTKHLYTKFVWPLYTKYGHAYEAFKLSITEPSVFNGFDIAENERKVLMETIIQKLKPQPHKVRADLEITCYDYEGIDAIKHAITASQNHALSVLKAPEDGKFDEKAFGVVTIKLVAPPLYVMVGTFDEKEKGLSMVGQCVDVLSEEITKKNGNLTIKAAPRIVGAVDDQELRDLMEQLEVENQDGDGEEHEDDDDDDDDEEEEEKPKEKKSSRK</sequence>
<protein>
    <recommendedName>
        <fullName>Eukaryotic translation initiation factor 2 subunit 1</fullName>
    </recommendedName>
    <alternativeName>
        <fullName>Eukaryotic translation initiation factor 2 subunit alpha</fullName>
        <shortName>eIF-2-alpha</shortName>
        <shortName>eIF-2A</shortName>
        <shortName>eIF-2alpha</shortName>
        <shortName>eIF2-alpha</shortName>
    </alternativeName>
</protein>